<feature type="chain" id="PRO_1000057649" description="Translation initiation factor IF-2">
    <location>
        <begin position="1"/>
        <end position="719"/>
    </location>
</feature>
<feature type="domain" description="tr-type G">
    <location>
        <begin position="221"/>
        <end position="390"/>
    </location>
</feature>
<feature type="region of interest" description="Disordered" evidence="3">
    <location>
        <begin position="54"/>
        <end position="75"/>
    </location>
</feature>
<feature type="region of interest" description="Disordered" evidence="3">
    <location>
        <begin position="97"/>
        <end position="122"/>
    </location>
</feature>
<feature type="region of interest" description="G1" evidence="1">
    <location>
        <begin position="230"/>
        <end position="237"/>
    </location>
</feature>
<feature type="region of interest" description="G2" evidence="1">
    <location>
        <begin position="255"/>
        <end position="259"/>
    </location>
</feature>
<feature type="region of interest" description="G3" evidence="1">
    <location>
        <begin position="276"/>
        <end position="279"/>
    </location>
</feature>
<feature type="region of interest" description="G4" evidence="1">
    <location>
        <begin position="330"/>
        <end position="333"/>
    </location>
</feature>
<feature type="region of interest" description="G5" evidence="1">
    <location>
        <begin position="366"/>
        <end position="368"/>
    </location>
</feature>
<feature type="compositionally biased region" description="Basic and acidic residues" evidence="3">
    <location>
        <begin position="54"/>
        <end position="67"/>
    </location>
</feature>
<feature type="compositionally biased region" description="Basic residues" evidence="3">
    <location>
        <begin position="109"/>
        <end position="122"/>
    </location>
</feature>
<feature type="binding site" evidence="2">
    <location>
        <begin position="230"/>
        <end position="237"/>
    </location>
    <ligand>
        <name>GTP</name>
        <dbReference type="ChEBI" id="CHEBI:37565"/>
    </ligand>
</feature>
<feature type="binding site" evidence="2">
    <location>
        <begin position="276"/>
        <end position="280"/>
    </location>
    <ligand>
        <name>GTP</name>
        <dbReference type="ChEBI" id="CHEBI:37565"/>
    </ligand>
</feature>
<feature type="binding site" evidence="2">
    <location>
        <begin position="330"/>
        <end position="333"/>
    </location>
    <ligand>
        <name>GTP</name>
        <dbReference type="ChEBI" id="CHEBI:37565"/>
    </ligand>
</feature>
<accession>A8MFA8</accession>
<keyword id="KW-0963">Cytoplasm</keyword>
<keyword id="KW-0342">GTP-binding</keyword>
<keyword id="KW-0396">Initiation factor</keyword>
<keyword id="KW-0547">Nucleotide-binding</keyword>
<keyword id="KW-0648">Protein biosynthesis</keyword>
<keyword id="KW-1185">Reference proteome</keyword>
<evidence type="ECO:0000250" key="1"/>
<evidence type="ECO:0000255" key="2">
    <source>
        <dbReference type="HAMAP-Rule" id="MF_00100"/>
    </source>
</evidence>
<evidence type="ECO:0000256" key="3">
    <source>
        <dbReference type="SAM" id="MobiDB-lite"/>
    </source>
</evidence>
<dbReference type="EMBL" id="CP000853">
    <property type="protein sequence ID" value="ABW19071.1"/>
    <property type="molecule type" value="Genomic_DNA"/>
</dbReference>
<dbReference type="RefSeq" id="WP_012159383.1">
    <property type="nucleotide sequence ID" value="NC_009922.1"/>
</dbReference>
<dbReference type="SMR" id="A8MFA8"/>
<dbReference type="STRING" id="350688.Clos_1528"/>
<dbReference type="KEGG" id="aoe:Clos_1528"/>
<dbReference type="eggNOG" id="COG0532">
    <property type="taxonomic scope" value="Bacteria"/>
</dbReference>
<dbReference type="HOGENOM" id="CLU_006301_5_1_9"/>
<dbReference type="OrthoDB" id="9811804at2"/>
<dbReference type="Proteomes" id="UP000000269">
    <property type="component" value="Chromosome"/>
</dbReference>
<dbReference type="GO" id="GO:0005829">
    <property type="term" value="C:cytosol"/>
    <property type="evidence" value="ECO:0007669"/>
    <property type="project" value="TreeGrafter"/>
</dbReference>
<dbReference type="GO" id="GO:0005525">
    <property type="term" value="F:GTP binding"/>
    <property type="evidence" value="ECO:0007669"/>
    <property type="project" value="UniProtKB-KW"/>
</dbReference>
<dbReference type="GO" id="GO:0003924">
    <property type="term" value="F:GTPase activity"/>
    <property type="evidence" value="ECO:0007669"/>
    <property type="project" value="UniProtKB-UniRule"/>
</dbReference>
<dbReference type="GO" id="GO:0003743">
    <property type="term" value="F:translation initiation factor activity"/>
    <property type="evidence" value="ECO:0007669"/>
    <property type="project" value="UniProtKB-UniRule"/>
</dbReference>
<dbReference type="CDD" id="cd01887">
    <property type="entry name" value="IF2_eIF5B"/>
    <property type="match status" value="1"/>
</dbReference>
<dbReference type="CDD" id="cd03702">
    <property type="entry name" value="IF2_mtIF2_II"/>
    <property type="match status" value="1"/>
</dbReference>
<dbReference type="CDD" id="cd03692">
    <property type="entry name" value="mtIF2_IVc"/>
    <property type="match status" value="1"/>
</dbReference>
<dbReference type="FunFam" id="2.40.30.10:FF:000007">
    <property type="entry name" value="Translation initiation factor IF-2"/>
    <property type="match status" value="1"/>
</dbReference>
<dbReference type="FunFam" id="2.40.30.10:FF:000008">
    <property type="entry name" value="Translation initiation factor IF-2"/>
    <property type="match status" value="1"/>
</dbReference>
<dbReference type="FunFam" id="3.40.50.10050:FF:000001">
    <property type="entry name" value="Translation initiation factor IF-2"/>
    <property type="match status" value="1"/>
</dbReference>
<dbReference type="FunFam" id="3.40.50.300:FF:000019">
    <property type="entry name" value="Translation initiation factor IF-2"/>
    <property type="match status" value="1"/>
</dbReference>
<dbReference type="Gene3D" id="1.10.10.2480">
    <property type="match status" value="1"/>
</dbReference>
<dbReference type="Gene3D" id="3.40.50.300">
    <property type="entry name" value="P-loop containing nucleotide triphosphate hydrolases"/>
    <property type="match status" value="1"/>
</dbReference>
<dbReference type="Gene3D" id="2.40.30.10">
    <property type="entry name" value="Translation factors"/>
    <property type="match status" value="2"/>
</dbReference>
<dbReference type="Gene3D" id="3.40.50.10050">
    <property type="entry name" value="Translation initiation factor IF- 2, domain 3"/>
    <property type="match status" value="1"/>
</dbReference>
<dbReference type="HAMAP" id="MF_00100_B">
    <property type="entry name" value="IF_2_B"/>
    <property type="match status" value="1"/>
</dbReference>
<dbReference type="InterPro" id="IPR053905">
    <property type="entry name" value="EF-G-like_DII"/>
</dbReference>
<dbReference type="InterPro" id="IPR044145">
    <property type="entry name" value="IF2_II"/>
</dbReference>
<dbReference type="InterPro" id="IPR006847">
    <property type="entry name" value="IF2_N"/>
</dbReference>
<dbReference type="InterPro" id="IPR027417">
    <property type="entry name" value="P-loop_NTPase"/>
</dbReference>
<dbReference type="InterPro" id="IPR005225">
    <property type="entry name" value="Small_GTP-bd"/>
</dbReference>
<dbReference type="InterPro" id="IPR000795">
    <property type="entry name" value="T_Tr_GTP-bd_dom"/>
</dbReference>
<dbReference type="InterPro" id="IPR000178">
    <property type="entry name" value="TF_IF2_bacterial-like"/>
</dbReference>
<dbReference type="InterPro" id="IPR015760">
    <property type="entry name" value="TIF_IF2"/>
</dbReference>
<dbReference type="InterPro" id="IPR023115">
    <property type="entry name" value="TIF_IF2_dom3"/>
</dbReference>
<dbReference type="InterPro" id="IPR036925">
    <property type="entry name" value="TIF_IF2_dom3_sf"/>
</dbReference>
<dbReference type="InterPro" id="IPR009000">
    <property type="entry name" value="Transl_B-barrel_sf"/>
</dbReference>
<dbReference type="NCBIfam" id="TIGR00487">
    <property type="entry name" value="IF-2"/>
    <property type="match status" value="1"/>
</dbReference>
<dbReference type="NCBIfam" id="TIGR00231">
    <property type="entry name" value="small_GTP"/>
    <property type="match status" value="1"/>
</dbReference>
<dbReference type="PANTHER" id="PTHR43381:SF5">
    <property type="entry name" value="TR-TYPE G DOMAIN-CONTAINING PROTEIN"/>
    <property type="match status" value="1"/>
</dbReference>
<dbReference type="PANTHER" id="PTHR43381">
    <property type="entry name" value="TRANSLATION INITIATION FACTOR IF-2-RELATED"/>
    <property type="match status" value="1"/>
</dbReference>
<dbReference type="Pfam" id="PF22042">
    <property type="entry name" value="EF-G_D2"/>
    <property type="match status" value="1"/>
</dbReference>
<dbReference type="Pfam" id="PF00009">
    <property type="entry name" value="GTP_EFTU"/>
    <property type="match status" value="1"/>
</dbReference>
<dbReference type="Pfam" id="PF11987">
    <property type="entry name" value="IF-2"/>
    <property type="match status" value="1"/>
</dbReference>
<dbReference type="Pfam" id="PF04760">
    <property type="entry name" value="IF2_N"/>
    <property type="match status" value="2"/>
</dbReference>
<dbReference type="SUPFAM" id="SSF52156">
    <property type="entry name" value="Initiation factor IF2/eIF5b, domain 3"/>
    <property type="match status" value="1"/>
</dbReference>
<dbReference type="SUPFAM" id="SSF52540">
    <property type="entry name" value="P-loop containing nucleoside triphosphate hydrolases"/>
    <property type="match status" value="1"/>
</dbReference>
<dbReference type="SUPFAM" id="SSF50447">
    <property type="entry name" value="Translation proteins"/>
    <property type="match status" value="2"/>
</dbReference>
<dbReference type="PROSITE" id="PS51722">
    <property type="entry name" value="G_TR_2"/>
    <property type="match status" value="1"/>
</dbReference>
<dbReference type="PROSITE" id="PS01176">
    <property type="entry name" value="IF2"/>
    <property type="match status" value="1"/>
</dbReference>
<organism>
    <name type="scientific">Alkaliphilus oremlandii (strain OhILAs)</name>
    <name type="common">Clostridium oremlandii (strain OhILAs)</name>
    <dbReference type="NCBI Taxonomy" id="350688"/>
    <lineage>
        <taxon>Bacteria</taxon>
        <taxon>Bacillati</taxon>
        <taxon>Bacillota</taxon>
        <taxon>Clostridia</taxon>
        <taxon>Peptostreptococcales</taxon>
        <taxon>Natronincolaceae</taxon>
        <taxon>Alkaliphilus</taxon>
    </lineage>
</organism>
<name>IF2_ALKOO</name>
<proteinExistence type="inferred from homology"/>
<sequence length="719" mass="78336">MSKIRVYQLAKKLGISNKELIDKLKELSIEVNSHMSTVDNENADVLIELFTEQNKEETKPNVDEKPPNQDTLTDNVNESAESIQNVDKKHFKKEINSTKNVTPNGNNKKDKKKKNKKDKRKNYIANNDVSAESKGEQVIQLKNKLTVKELSETLNKSASEIITKLIGLGIMATINQELDYDTASIIAAEFGIEVEPMTDIDAEEDVFDIIIEPDKPEDLKHRSPVVTVMGHVDHGKTSLLDAIRKTKVTNSEAGGITQHIGASEIKVNDKKIVFLDTPGHEAFTSMRARGAKVTDVAILVVAADDGVMPQTIEAISHAKAAEVPIIVAINKMDKPSANPDRVKQELADQGLLIEEWGGDVISVPVSARSGENIDALLEMVLLVSEMSELKANPNRKAIGTVIEAQLDVGKGPVATVLVQNGTLFIGDSVVIGNTYGRIRAMMNDSGKRVKVAGPSTAVEITGLSEVPEAGDQLFAVDDDKAAKAIVEKRINKIKEEQLKAGQKISLDALFSQMEQGQLKDLNLIIKADTQGSVEAVKQSLVKLSNDEVVINPIHGGVGGITESDVMLATASNAIIIGFNVRPTSNAASAAKKENVDIRTYRIIYKAIEDIEAAMKGMLDPEFVEEELGKAEVRATFKVPGAGTIGGCYVIEGKILRNAKIRLVRDNIVIHEGSIDSLKRFKDDAKEVATGYECGIGISQFNDLKEGDIIEAYHMKEIER</sequence>
<protein>
    <recommendedName>
        <fullName evidence="2">Translation initiation factor IF-2</fullName>
    </recommendedName>
</protein>
<gene>
    <name evidence="2" type="primary">infB</name>
    <name type="ordered locus">Clos_1528</name>
</gene>
<reference key="1">
    <citation type="submission" date="2007-10" db="EMBL/GenBank/DDBJ databases">
        <title>Complete genome of Alkaliphilus oremlandii OhILAs.</title>
        <authorList>
            <person name="Copeland A."/>
            <person name="Lucas S."/>
            <person name="Lapidus A."/>
            <person name="Barry K."/>
            <person name="Detter J.C."/>
            <person name="Glavina del Rio T."/>
            <person name="Hammon N."/>
            <person name="Israni S."/>
            <person name="Dalin E."/>
            <person name="Tice H."/>
            <person name="Pitluck S."/>
            <person name="Chain P."/>
            <person name="Malfatti S."/>
            <person name="Shin M."/>
            <person name="Vergez L."/>
            <person name="Schmutz J."/>
            <person name="Larimer F."/>
            <person name="Land M."/>
            <person name="Hauser L."/>
            <person name="Kyrpides N."/>
            <person name="Mikhailova N."/>
            <person name="Stolz J.F."/>
            <person name="Dawson A."/>
            <person name="Fisher E."/>
            <person name="Crable B."/>
            <person name="Perera E."/>
            <person name="Lisak J."/>
            <person name="Ranganathan M."/>
            <person name="Basu P."/>
            <person name="Richardson P."/>
        </authorList>
    </citation>
    <scope>NUCLEOTIDE SEQUENCE [LARGE SCALE GENOMIC DNA]</scope>
    <source>
        <strain>OhILAs</strain>
    </source>
</reference>
<comment type="function">
    <text evidence="2">One of the essential components for the initiation of protein synthesis. Protects formylmethionyl-tRNA from spontaneous hydrolysis and promotes its binding to the 30S ribosomal subunits. Also involved in the hydrolysis of GTP during the formation of the 70S ribosomal complex.</text>
</comment>
<comment type="subcellular location">
    <subcellularLocation>
        <location evidence="2">Cytoplasm</location>
    </subcellularLocation>
</comment>
<comment type="similarity">
    <text evidence="2">Belongs to the TRAFAC class translation factor GTPase superfamily. Classic translation factor GTPase family. IF-2 subfamily.</text>
</comment>